<protein>
    <recommendedName>
        <fullName evidence="1">Glycine--tRNA ligase alpha subunit</fullName>
        <ecNumber evidence="1">6.1.1.14</ecNumber>
    </recommendedName>
    <alternativeName>
        <fullName evidence="1">Glycyl-tRNA synthetase alpha subunit</fullName>
        <shortName evidence="1">GlyRS</shortName>
    </alternativeName>
</protein>
<comment type="catalytic activity">
    <reaction evidence="1">
        <text>tRNA(Gly) + glycine + ATP = glycyl-tRNA(Gly) + AMP + diphosphate</text>
        <dbReference type="Rhea" id="RHEA:16013"/>
        <dbReference type="Rhea" id="RHEA-COMP:9664"/>
        <dbReference type="Rhea" id="RHEA-COMP:9683"/>
        <dbReference type="ChEBI" id="CHEBI:30616"/>
        <dbReference type="ChEBI" id="CHEBI:33019"/>
        <dbReference type="ChEBI" id="CHEBI:57305"/>
        <dbReference type="ChEBI" id="CHEBI:78442"/>
        <dbReference type="ChEBI" id="CHEBI:78522"/>
        <dbReference type="ChEBI" id="CHEBI:456215"/>
        <dbReference type="EC" id="6.1.1.14"/>
    </reaction>
</comment>
<comment type="subunit">
    <text evidence="1">Tetramer of two alpha and two beta subunits.</text>
</comment>
<comment type="subcellular location">
    <subcellularLocation>
        <location evidence="1">Cytoplasm</location>
    </subcellularLocation>
</comment>
<comment type="similarity">
    <text evidence="1">Belongs to the class-II aminoacyl-tRNA synthetase family.</text>
</comment>
<gene>
    <name evidence="1" type="primary">glyQ</name>
    <name type="ordered locus">Pden_0538</name>
</gene>
<proteinExistence type="inferred from homology"/>
<keyword id="KW-0030">Aminoacyl-tRNA synthetase</keyword>
<keyword id="KW-0067">ATP-binding</keyword>
<keyword id="KW-0963">Cytoplasm</keyword>
<keyword id="KW-0436">Ligase</keyword>
<keyword id="KW-0547">Nucleotide-binding</keyword>
<keyword id="KW-0648">Protein biosynthesis</keyword>
<keyword id="KW-1185">Reference proteome</keyword>
<accession>A1AZF6</accession>
<dbReference type="EC" id="6.1.1.14" evidence="1"/>
<dbReference type="EMBL" id="CP000489">
    <property type="protein sequence ID" value="ABL68650.1"/>
    <property type="molecule type" value="Genomic_DNA"/>
</dbReference>
<dbReference type="RefSeq" id="WP_011746883.1">
    <property type="nucleotide sequence ID" value="NC_008686.1"/>
</dbReference>
<dbReference type="SMR" id="A1AZF6"/>
<dbReference type="STRING" id="318586.Pden_0538"/>
<dbReference type="EnsemblBacteria" id="ABL68650">
    <property type="protein sequence ID" value="ABL68650"/>
    <property type="gene ID" value="Pden_0538"/>
</dbReference>
<dbReference type="GeneID" id="93451764"/>
<dbReference type="KEGG" id="pde:Pden_0538"/>
<dbReference type="eggNOG" id="COG0752">
    <property type="taxonomic scope" value="Bacteria"/>
</dbReference>
<dbReference type="HOGENOM" id="CLU_057066_1_0_5"/>
<dbReference type="OrthoDB" id="9802183at2"/>
<dbReference type="Proteomes" id="UP000000361">
    <property type="component" value="Chromosome 1"/>
</dbReference>
<dbReference type="GO" id="GO:0005829">
    <property type="term" value="C:cytosol"/>
    <property type="evidence" value="ECO:0007669"/>
    <property type="project" value="TreeGrafter"/>
</dbReference>
<dbReference type="GO" id="GO:0005524">
    <property type="term" value="F:ATP binding"/>
    <property type="evidence" value="ECO:0007669"/>
    <property type="project" value="UniProtKB-UniRule"/>
</dbReference>
<dbReference type="GO" id="GO:0004820">
    <property type="term" value="F:glycine-tRNA ligase activity"/>
    <property type="evidence" value="ECO:0007669"/>
    <property type="project" value="UniProtKB-UniRule"/>
</dbReference>
<dbReference type="GO" id="GO:0006426">
    <property type="term" value="P:glycyl-tRNA aminoacylation"/>
    <property type="evidence" value="ECO:0007669"/>
    <property type="project" value="UniProtKB-UniRule"/>
</dbReference>
<dbReference type="CDD" id="cd00733">
    <property type="entry name" value="GlyRS_alpha_core"/>
    <property type="match status" value="1"/>
</dbReference>
<dbReference type="FunFam" id="3.30.930.10:FF:000006">
    <property type="entry name" value="Glycine--tRNA ligase alpha subunit"/>
    <property type="match status" value="1"/>
</dbReference>
<dbReference type="Gene3D" id="3.30.930.10">
    <property type="entry name" value="Bira Bifunctional Protein, Domain 2"/>
    <property type="match status" value="1"/>
</dbReference>
<dbReference type="Gene3D" id="1.20.58.180">
    <property type="entry name" value="Class II aaRS and biotin synthetases, domain 2"/>
    <property type="match status" value="1"/>
</dbReference>
<dbReference type="HAMAP" id="MF_00254">
    <property type="entry name" value="Gly_tRNA_synth_alpha"/>
    <property type="match status" value="1"/>
</dbReference>
<dbReference type="InterPro" id="IPR045864">
    <property type="entry name" value="aa-tRNA-synth_II/BPL/LPL"/>
</dbReference>
<dbReference type="InterPro" id="IPR006194">
    <property type="entry name" value="Gly-tRNA-synth_heterodimer"/>
</dbReference>
<dbReference type="InterPro" id="IPR002310">
    <property type="entry name" value="Gly-tRNA_ligase_asu"/>
</dbReference>
<dbReference type="NCBIfam" id="TIGR00388">
    <property type="entry name" value="glyQ"/>
    <property type="match status" value="1"/>
</dbReference>
<dbReference type="NCBIfam" id="NF006827">
    <property type="entry name" value="PRK09348.1"/>
    <property type="match status" value="1"/>
</dbReference>
<dbReference type="PANTHER" id="PTHR30075:SF2">
    <property type="entry name" value="GLYCINE--TRNA LIGASE, CHLOROPLASTIC_MITOCHONDRIAL 2"/>
    <property type="match status" value="1"/>
</dbReference>
<dbReference type="PANTHER" id="PTHR30075">
    <property type="entry name" value="GLYCYL-TRNA SYNTHETASE"/>
    <property type="match status" value="1"/>
</dbReference>
<dbReference type="Pfam" id="PF02091">
    <property type="entry name" value="tRNA-synt_2e"/>
    <property type="match status" value="1"/>
</dbReference>
<dbReference type="PRINTS" id="PR01044">
    <property type="entry name" value="TRNASYNTHGA"/>
</dbReference>
<dbReference type="SUPFAM" id="SSF55681">
    <property type="entry name" value="Class II aaRS and biotin synthetases"/>
    <property type="match status" value="1"/>
</dbReference>
<dbReference type="PROSITE" id="PS50861">
    <property type="entry name" value="AA_TRNA_LIGASE_II_GLYAB"/>
    <property type="match status" value="1"/>
</dbReference>
<organism>
    <name type="scientific">Paracoccus denitrificans (strain Pd 1222)</name>
    <dbReference type="NCBI Taxonomy" id="318586"/>
    <lineage>
        <taxon>Bacteria</taxon>
        <taxon>Pseudomonadati</taxon>
        <taxon>Pseudomonadota</taxon>
        <taxon>Alphaproteobacteria</taxon>
        <taxon>Rhodobacterales</taxon>
        <taxon>Paracoccaceae</taxon>
        <taxon>Paracoccus</taxon>
    </lineage>
</organism>
<name>SYGA_PARDP</name>
<evidence type="ECO:0000255" key="1">
    <source>
        <dbReference type="HAMAP-Rule" id="MF_00254"/>
    </source>
</evidence>
<sequence>MTSPKDNQTAKPVCFQDVILRLQSYWAAQGCAVLQPYDMEVGAGTFHPATTLRSLGARPWAAAYVQPSRRPTDGRYGENPNRLQHYYQYQVIIKPSPPNLQELYLGSLAAIGLDPMIHDVRFVEDDWESPTLGAWGLGWEVWCDGMEVSQFTYFQQVGGHDCRPVSGELTYGLERLAMYVLGVEHVMDMPFNPPGSPIPLSYGDVFRQAEREYSRWNFEQADTGMLLQHFKDAEAECDRILTAAETDSAGRRIPMAHPAYDQAIKASHLFNLLDARGVISVTERQAYIGRVRALAKRCADLFVTTEAATLQAEDAA</sequence>
<feature type="chain" id="PRO_1000059054" description="Glycine--tRNA ligase alpha subunit">
    <location>
        <begin position="1"/>
        <end position="316"/>
    </location>
</feature>
<reference key="1">
    <citation type="submission" date="2006-12" db="EMBL/GenBank/DDBJ databases">
        <title>Complete sequence of chromosome 1 of Paracoccus denitrificans PD1222.</title>
        <authorList>
            <person name="Copeland A."/>
            <person name="Lucas S."/>
            <person name="Lapidus A."/>
            <person name="Barry K."/>
            <person name="Detter J.C."/>
            <person name="Glavina del Rio T."/>
            <person name="Hammon N."/>
            <person name="Israni S."/>
            <person name="Dalin E."/>
            <person name="Tice H."/>
            <person name="Pitluck S."/>
            <person name="Munk A.C."/>
            <person name="Brettin T."/>
            <person name="Bruce D."/>
            <person name="Han C."/>
            <person name="Tapia R."/>
            <person name="Gilna P."/>
            <person name="Schmutz J."/>
            <person name="Larimer F."/>
            <person name="Land M."/>
            <person name="Hauser L."/>
            <person name="Kyrpides N."/>
            <person name="Lykidis A."/>
            <person name="Spiro S."/>
            <person name="Richardson D.J."/>
            <person name="Moir J.W.B."/>
            <person name="Ferguson S.J."/>
            <person name="van Spanning R.J.M."/>
            <person name="Richardson P."/>
        </authorList>
    </citation>
    <scope>NUCLEOTIDE SEQUENCE [LARGE SCALE GENOMIC DNA]</scope>
    <source>
        <strain>Pd 1222</strain>
    </source>
</reference>